<evidence type="ECO:0000250" key="1"/>
<evidence type="ECO:0000250" key="2">
    <source>
        <dbReference type="UniProtKB" id="P00157"/>
    </source>
</evidence>
<evidence type="ECO:0000255" key="3">
    <source>
        <dbReference type="PROSITE-ProRule" id="PRU00967"/>
    </source>
</evidence>
<evidence type="ECO:0000255" key="4">
    <source>
        <dbReference type="PROSITE-ProRule" id="PRU00968"/>
    </source>
</evidence>
<name>CYB_MYOPA</name>
<proteinExistence type="inferred from homology"/>
<sequence>MTHLRKSHPLIKIINHSFIDLPTPSNISAWWNFGSLLGICLMMQILTGLFLAMHYTADTTTAFSSVTHICRDVNYGWLIRYLHANGASMFFILIYLHIGRGIYYGSYTLSETWNIGILLLLAVMATAFMGYVLPWGQMSFWGATVITNLLSAIPYIGPTLVEWIWGGFSVDKATLTRFFAFHFILPFIIVALVMTHLLFLHETGSNNPSGLNSDSDKIPFHPYYTIKDIMGFMFMGFTLLFLVLFSPDLLGDPDNYTPANPLNTPPHIKPEWYFLFAYAILRSIPNKLGGVMALLASILVLALFPILHLSKQRSMTFRPISDCLLWMLTANLVVLTWIGGQPVEHPYILIGQLASISYFLTILVLMPLTSMMENKFLKW</sequence>
<accession>Q35054</accession>
<feature type="chain" id="PRO_0000255098" description="Cytochrome b">
    <location>
        <begin position="1"/>
        <end position="379"/>
    </location>
</feature>
<feature type="transmembrane region" description="Helical" evidence="2">
    <location>
        <begin position="33"/>
        <end position="53"/>
    </location>
</feature>
<feature type="transmembrane region" description="Helical" evidence="2">
    <location>
        <begin position="77"/>
        <end position="98"/>
    </location>
</feature>
<feature type="transmembrane region" description="Helical" evidence="2">
    <location>
        <begin position="113"/>
        <end position="133"/>
    </location>
</feature>
<feature type="transmembrane region" description="Helical" evidence="2">
    <location>
        <begin position="178"/>
        <end position="198"/>
    </location>
</feature>
<feature type="transmembrane region" description="Helical" evidence="2">
    <location>
        <begin position="226"/>
        <end position="246"/>
    </location>
</feature>
<feature type="transmembrane region" description="Helical" evidence="2">
    <location>
        <begin position="288"/>
        <end position="308"/>
    </location>
</feature>
<feature type="transmembrane region" description="Helical" evidence="2">
    <location>
        <begin position="320"/>
        <end position="340"/>
    </location>
</feature>
<feature type="transmembrane region" description="Helical" evidence="2">
    <location>
        <begin position="347"/>
        <end position="367"/>
    </location>
</feature>
<feature type="binding site" description="axial binding residue" evidence="2">
    <location>
        <position position="83"/>
    </location>
    <ligand>
        <name>heme b</name>
        <dbReference type="ChEBI" id="CHEBI:60344"/>
        <label>b562</label>
    </ligand>
    <ligandPart>
        <name>Fe</name>
        <dbReference type="ChEBI" id="CHEBI:18248"/>
    </ligandPart>
</feature>
<feature type="binding site" description="axial binding residue" evidence="2">
    <location>
        <position position="97"/>
    </location>
    <ligand>
        <name>heme b</name>
        <dbReference type="ChEBI" id="CHEBI:60344"/>
        <label>b566</label>
    </ligand>
    <ligandPart>
        <name>Fe</name>
        <dbReference type="ChEBI" id="CHEBI:18248"/>
    </ligandPart>
</feature>
<feature type="binding site" description="axial binding residue" evidence="2">
    <location>
        <position position="182"/>
    </location>
    <ligand>
        <name>heme b</name>
        <dbReference type="ChEBI" id="CHEBI:60344"/>
        <label>b562</label>
    </ligand>
    <ligandPart>
        <name>Fe</name>
        <dbReference type="ChEBI" id="CHEBI:18248"/>
    </ligandPart>
</feature>
<feature type="binding site" description="axial binding residue" evidence="2">
    <location>
        <position position="196"/>
    </location>
    <ligand>
        <name>heme b</name>
        <dbReference type="ChEBI" id="CHEBI:60344"/>
        <label>b566</label>
    </ligand>
    <ligandPart>
        <name>Fe</name>
        <dbReference type="ChEBI" id="CHEBI:18248"/>
    </ligandPart>
</feature>
<feature type="binding site" evidence="2">
    <location>
        <position position="201"/>
    </location>
    <ligand>
        <name>a ubiquinone</name>
        <dbReference type="ChEBI" id="CHEBI:16389"/>
    </ligand>
</feature>
<reference key="1">
    <citation type="journal article" date="1996" name="Mol. Phylogenet. Evol.">
        <title>The simultaneous diversification of South American echimyid rodents (Hystricognathi) based on complete cytochrome b sequences.</title>
        <authorList>
            <person name="Lara M.C."/>
            <person name="Patton J.L."/>
            <person name="da Silva M.N.F."/>
        </authorList>
    </citation>
    <scope>NUCLEOTIDE SEQUENCE [GENOMIC DNA]</scope>
</reference>
<geneLocation type="mitochondrion"/>
<dbReference type="EMBL" id="U34850">
    <property type="protein sequence ID" value="AAC52562.1"/>
    <property type="molecule type" value="Genomic_DNA"/>
</dbReference>
<dbReference type="SMR" id="Q35054"/>
<dbReference type="GO" id="GO:0005743">
    <property type="term" value="C:mitochondrial inner membrane"/>
    <property type="evidence" value="ECO:0007669"/>
    <property type="project" value="UniProtKB-SubCell"/>
</dbReference>
<dbReference type="GO" id="GO:0045275">
    <property type="term" value="C:respiratory chain complex III"/>
    <property type="evidence" value="ECO:0007669"/>
    <property type="project" value="InterPro"/>
</dbReference>
<dbReference type="GO" id="GO:0046872">
    <property type="term" value="F:metal ion binding"/>
    <property type="evidence" value="ECO:0007669"/>
    <property type="project" value="UniProtKB-KW"/>
</dbReference>
<dbReference type="GO" id="GO:0008121">
    <property type="term" value="F:ubiquinol-cytochrome-c reductase activity"/>
    <property type="evidence" value="ECO:0007669"/>
    <property type="project" value="InterPro"/>
</dbReference>
<dbReference type="GO" id="GO:0006122">
    <property type="term" value="P:mitochondrial electron transport, ubiquinol to cytochrome c"/>
    <property type="evidence" value="ECO:0007669"/>
    <property type="project" value="TreeGrafter"/>
</dbReference>
<dbReference type="CDD" id="cd00290">
    <property type="entry name" value="cytochrome_b_C"/>
    <property type="match status" value="1"/>
</dbReference>
<dbReference type="CDD" id="cd00284">
    <property type="entry name" value="Cytochrome_b_N"/>
    <property type="match status" value="1"/>
</dbReference>
<dbReference type="FunFam" id="1.20.810.10:FF:000002">
    <property type="entry name" value="Cytochrome b"/>
    <property type="match status" value="1"/>
</dbReference>
<dbReference type="Gene3D" id="1.20.810.10">
    <property type="entry name" value="Cytochrome Bc1 Complex, Chain C"/>
    <property type="match status" value="1"/>
</dbReference>
<dbReference type="InterPro" id="IPR005798">
    <property type="entry name" value="Cyt_b/b6_C"/>
</dbReference>
<dbReference type="InterPro" id="IPR036150">
    <property type="entry name" value="Cyt_b/b6_C_sf"/>
</dbReference>
<dbReference type="InterPro" id="IPR005797">
    <property type="entry name" value="Cyt_b/b6_N"/>
</dbReference>
<dbReference type="InterPro" id="IPR027387">
    <property type="entry name" value="Cytb/b6-like_sf"/>
</dbReference>
<dbReference type="InterPro" id="IPR030689">
    <property type="entry name" value="Cytochrome_b"/>
</dbReference>
<dbReference type="InterPro" id="IPR048260">
    <property type="entry name" value="Cytochrome_b_C_euk/bac"/>
</dbReference>
<dbReference type="InterPro" id="IPR048259">
    <property type="entry name" value="Cytochrome_b_N_euk/bac"/>
</dbReference>
<dbReference type="InterPro" id="IPR016174">
    <property type="entry name" value="Di-haem_cyt_TM"/>
</dbReference>
<dbReference type="PANTHER" id="PTHR19271">
    <property type="entry name" value="CYTOCHROME B"/>
    <property type="match status" value="1"/>
</dbReference>
<dbReference type="PANTHER" id="PTHR19271:SF16">
    <property type="entry name" value="CYTOCHROME B"/>
    <property type="match status" value="1"/>
</dbReference>
<dbReference type="Pfam" id="PF00032">
    <property type="entry name" value="Cytochrom_B_C"/>
    <property type="match status" value="1"/>
</dbReference>
<dbReference type="Pfam" id="PF00033">
    <property type="entry name" value="Cytochrome_B"/>
    <property type="match status" value="1"/>
</dbReference>
<dbReference type="PIRSF" id="PIRSF038885">
    <property type="entry name" value="COB"/>
    <property type="match status" value="1"/>
</dbReference>
<dbReference type="SUPFAM" id="SSF81648">
    <property type="entry name" value="a domain/subunit of cytochrome bc1 complex (Ubiquinol-cytochrome c reductase)"/>
    <property type="match status" value="1"/>
</dbReference>
<dbReference type="SUPFAM" id="SSF81342">
    <property type="entry name" value="Transmembrane di-heme cytochromes"/>
    <property type="match status" value="1"/>
</dbReference>
<dbReference type="PROSITE" id="PS51003">
    <property type="entry name" value="CYTB_CTER"/>
    <property type="match status" value="1"/>
</dbReference>
<dbReference type="PROSITE" id="PS51002">
    <property type="entry name" value="CYTB_NTER"/>
    <property type="match status" value="1"/>
</dbReference>
<organism>
    <name type="scientific">Myoprocta pratti</name>
    <name type="common">Green acouchi</name>
    <dbReference type="NCBI Taxonomy" id="43318"/>
    <lineage>
        <taxon>Eukaryota</taxon>
        <taxon>Metazoa</taxon>
        <taxon>Chordata</taxon>
        <taxon>Craniata</taxon>
        <taxon>Vertebrata</taxon>
        <taxon>Euteleostomi</taxon>
        <taxon>Mammalia</taxon>
        <taxon>Eutheria</taxon>
        <taxon>Euarchontoglires</taxon>
        <taxon>Glires</taxon>
        <taxon>Rodentia</taxon>
        <taxon>Hystricomorpha</taxon>
        <taxon>Dasyproctidae</taxon>
        <taxon>Myoprocta</taxon>
    </lineage>
</organism>
<gene>
    <name type="primary">MT-CYB</name>
    <name type="synonym">COB</name>
    <name type="synonym">CYTB</name>
    <name type="synonym">MTCYB</name>
</gene>
<protein>
    <recommendedName>
        <fullName>Cytochrome b</fullName>
    </recommendedName>
    <alternativeName>
        <fullName>Complex III subunit 3</fullName>
    </alternativeName>
    <alternativeName>
        <fullName>Complex III subunit III</fullName>
    </alternativeName>
    <alternativeName>
        <fullName>Cytochrome b-c1 complex subunit 3</fullName>
    </alternativeName>
    <alternativeName>
        <fullName>Ubiquinol-cytochrome-c reductase complex cytochrome b subunit</fullName>
    </alternativeName>
</protein>
<comment type="function">
    <text evidence="2">Component of the ubiquinol-cytochrome c reductase complex (complex III or cytochrome b-c1 complex) that is part of the mitochondrial respiratory chain. The b-c1 complex mediates electron transfer from ubiquinol to cytochrome c. Contributes to the generation of a proton gradient across the mitochondrial membrane that is then used for ATP synthesis.</text>
</comment>
<comment type="cofactor">
    <cofactor evidence="2">
        <name>heme b</name>
        <dbReference type="ChEBI" id="CHEBI:60344"/>
    </cofactor>
    <text evidence="2">Binds 2 heme b groups non-covalently.</text>
</comment>
<comment type="subunit">
    <text evidence="2">The cytochrome bc1 complex contains 11 subunits: 3 respiratory subunits (MT-CYB, CYC1 and UQCRFS1), 2 core proteins (UQCRC1 and UQCRC2) and 6 low-molecular weight proteins (UQCRH/QCR6, UQCRB/QCR7, UQCRQ/QCR8, UQCR10/QCR9, UQCR11/QCR10 and a cleavage product of UQCRFS1). This cytochrome bc1 complex then forms a dimer.</text>
</comment>
<comment type="subcellular location">
    <subcellularLocation>
        <location evidence="2">Mitochondrion inner membrane</location>
        <topology evidence="2">Multi-pass membrane protein</topology>
    </subcellularLocation>
</comment>
<comment type="miscellaneous">
    <text evidence="1">Heme 1 (or BL or b562) is low-potential and absorbs at about 562 nm, and heme 2 (or BH or b566) is high-potential and absorbs at about 566 nm.</text>
</comment>
<comment type="similarity">
    <text evidence="3 4">Belongs to the cytochrome b family.</text>
</comment>
<comment type="caution">
    <text evidence="2">The full-length protein contains only eight transmembrane helices, not nine as predicted by bioinformatics tools.</text>
</comment>
<keyword id="KW-0249">Electron transport</keyword>
<keyword id="KW-0349">Heme</keyword>
<keyword id="KW-0408">Iron</keyword>
<keyword id="KW-0472">Membrane</keyword>
<keyword id="KW-0479">Metal-binding</keyword>
<keyword id="KW-0496">Mitochondrion</keyword>
<keyword id="KW-0999">Mitochondrion inner membrane</keyword>
<keyword id="KW-0679">Respiratory chain</keyword>
<keyword id="KW-0812">Transmembrane</keyword>
<keyword id="KW-1133">Transmembrane helix</keyword>
<keyword id="KW-0813">Transport</keyword>
<keyword id="KW-0830">Ubiquinone</keyword>